<comment type="subunit">
    <text evidence="1">Part of the 50S ribosomal subunit. Contacts protein L32.</text>
</comment>
<comment type="similarity">
    <text evidence="1">Belongs to the bacterial ribosomal protein bL17 family.</text>
</comment>
<name>RL17_CHRVO</name>
<organism>
    <name type="scientific">Chromobacterium violaceum (strain ATCC 12472 / DSM 30191 / JCM 1249 / CCUG 213 / NBRC 12614 / NCIMB 9131 / NCTC 9757 / MK)</name>
    <dbReference type="NCBI Taxonomy" id="243365"/>
    <lineage>
        <taxon>Bacteria</taxon>
        <taxon>Pseudomonadati</taxon>
        <taxon>Pseudomonadota</taxon>
        <taxon>Betaproteobacteria</taxon>
        <taxon>Neisseriales</taxon>
        <taxon>Chromobacteriaceae</taxon>
        <taxon>Chromobacterium</taxon>
    </lineage>
</organism>
<protein>
    <recommendedName>
        <fullName evidence="1">Large ribosomal subunit protein bL17</fullName>
    </recommendedName>
    <alternativeName>
        <fullName evidence="2">50S ribosomal protein L17</fullName>
    </alternativeName>
</protein>
<feature type="chain" id="PRO_0000267853" description="Large ribosomal subunit protein bL17">
    <location>
        <begin position="1"/>
        <end position="131"/>
    </location>
</feature>
<accession>Q7NQH8</accession>
<reference key="1">
    <citation type="journal article" date="2003" name="Proc. Natl. Acad. Sci. U.S.A.">
        <title>The complete genome sequence of Chromobacterium violaceum reveals remarkable and exploitable bacterial adaptability.</title>
        <authorList>
            <person name="Vasconcelos A.T.R."/>
            <person name="de Almeida D.F."/>
            <person name="Hungria M."/>
            <person name="Guimaraes C.T."/>
            <person name="Antonio R.V."/>
            <person name="Almeida F.C."/>
            <person name="de Almeida L.G.P."/>
            <person name="de Almeida R."/>
            <person name="Alves-Gomes J.A."/>
            <person name="Andrade E.M."/>
            <person name="Araripe J."/>
            <person name="de Araujo M.F.F."/>
            <person name="Astolfi-Filho S."/>
            <person name="Azevedo V."/>
            <person name="Baptista A.J."/>
            <person name="Bataus L.A.M."/>
            <person name="Batista J.S."/>
            <person name="Belo A."/>
            <person name="van den Berg C."/>
            <person name="Bogo M."/>
            <person name="Bonatto S."/>
            <person name="Bordignon J."/>
            <person name="Brigido M.M."/>
            <person name="Brito C.A."/>
            <person name="Brocchi M."/>
            <person name="Burity H.A."/>
            <person name="Camargo A.A."/>
            <person name="Cardoso D.D.P."/>
            <person name="Carneiro N.P."/>
            <person name="Carraro D.M."/>
            <person name="Carvalho C.M.B."/>
            <person name="Cascardo J.C.M."/>
            <person name="Cavada B.S."/>
            <person name="Chueire L.M.O."/>
            <person name="Creczynski-Pasa T.B."/>
            <person name="Cunha-Junior N.C."/>
            <person name="Fagundes N."/>
            <person name="Falcao C.L."/>
            <person name="Fantinatti F."/>
            <person name="Farias I.P."/>
            <person name="Felipe M.S.S."/>
            <person name="Ferrari L.P."/>
            <person name="Ferro J.A."/>
            <person name="Ferro M.I.T."/>
            <person name="Franco G.R."/>
            <person name="Freitas N.S.A."/>
            <person name="Furlan L.R."/>
            <person name="Gazzinelli R.T."/>
            <person name="Gomes E.A."/>
            <person name="Goncalves P.R."/>
            <person name="Grangeiro T.B."/>
            <person name="Grattapaglia D."/>
            <person name="Grisard E.C."/>
            <person name="Hanna E.S."/>
            <person name="Jardim S.N."/>
            <person name="Laurino J."/>
            <person name="Leoi L.C.T."/>
            <person name="Lima L.F.A."/>
            <person name="Loureiro M.F."/>
            <person name="Lyra M.C.C.P."/>
            <person name="Madeira H.M.F."/>
            <person name="Manfio G.P."/>
            <person name="Maranhao A.Q."/>
            <person name="Martins W.S."/>
            <person name="di Mauro S.M.Z."/>
            <person name="de Medeiros S.R.B."/>
            <person name="Meissner R.V."/>
            <person name="Moreira M.A.M."/>
            <person name="Nascimento F.F."/>
            <person name="Nicolas M.F."/>
            <person name="Oliveira J.G."/>
            <person name="Oliveira S.C."/>
            <person name="Paixao R.F.C."/>
            <person name="Parente J.A."/>
            <person name="Pedrosa F.O."/>
            <person name="Pena S.D.J."/>
            <person name="Pereira J.O."/>
            <person name="Pereira M."/>
            <person name="Pinto L.S.R.C."/>
            <person name="Pinto L.S."/>
            <person name="Porto J.I.R."/>
            <person name="Potrich D.P."/>
            <person name="Ramalho-Neto C.E."/>
            <person name="Reis A.M.M."/>
            <person name="Rigo L.U."/>
            <person name="Rondinelli E."/>
            <person name="Santos E.B.P."/>
            <person name="Santos F.R."/>
            <person name="Schneider M.P.C."/>
            <person name="Seuanez H.N."/>
            <person name="Silva A.M.R."/>
            <person name="da Silva A.L.C."/>
            <person name="Silva D.W."/>
            <person name="Silva R."/>
            <person name="Simoes I.C."/>
            <person name="Simon D."/>
            <person name="Soares C.M.A."/>
            <person name="Soares R.B.A."/>
            <person name="Souza E.M."/>
            <person name="Souza K.R.L."/>
            <person name="Souza R.C."/>
            <person name="Steffens M.B.R."/>
            <person name="Steindel M."/>
            <person name="Teixeira S.R."/>
            <person name="Urmenyi T."/>
            <person name="Vettore A."/>
            <person name="Wassem R."/>
            <person name="Zaha A."/>
            <person name="Simpson A.J.G."/>
        </authorList>
    </citation>
    <scope>NUCLEOTIDE SEQUENCE [LARGE SCALE GENOMIC DNA]</scope>
    <source>
        <strain>ATCC 12472 / DSM 30191 / JCM 1249 / CCUG 213 / NBRC 12614 / NCIMB 9131 / NCTC 9757 / MK</strain>
    </source>
</reference>
<gene>
    <name evidence="1" type="primary">rplQ</name>
    <name type="ordered locus">CV_4159</name>
</gene>
<keyword id="KW-1185">Reference proteome</keyword>
<keyword id="KW-0687">Ribonucleoprotein</keyword>
<keyword id="KW-0689">Ribosomal protein</keyword>
<dbReference type="EMBL" id="AE016825">
    <property type="protein sequence ID" value="AAQ61820.1"/>
    <property type="molecule type" value="Genomic_DNA"/>
</dbReference>
<dbReference type="RefSeq" id="WP_011137706.1">
    <property type="nucleotide sequence ID" value="NC_005085.1"/>
</dbReference>
<dbReference type="SMR" id="Q7NQH8"/>
<dbReference type="STRING" id="243365.CV_4159"/>
<dbReference type="GeneID" id="66366369"/>
<dbReference type="KEGG" id="cvi:CV_4159"/>
<dbReference type="eggNOG" id="COG0203">
    <property type="taxonomic scope" value="Bacteria"/>
</dbReference>
<dbReference type="HOGENOM" id="CLU_074407_2_0_4"/>
<dbReference type="OrthoDB" id="9809073at2"/>
<dbReference type="Proteomes" id="UP000001424">
    <property type="component" value="Chromosome"/>
</dbReference>
<dbReference type="GO" id="GO:0022625">
    <property type="term" value="C:cytosolic large ribosomal subunit"/>
    <property type="evidence" value="ECO:0007669"/>
    <property type="project" value="TreeGrafter"/>
</dbReference>
<dbReference type="GO" id="GO:0003735">
    <property type="term" value="F:structural constituent of ribosome"/>
    <property type="evidence" value="ECO:0007669"/>
    <property type="project" value="InterPro"/>
</dbReference>
<dbReference type="GO" id="GO:0006412">
    <property type="term" value="P:translation"/>
    <property type="evidence" value="ECO:0007669"/>
    <property type="project" value="UniProtKB-UniRule"/>
</dbReference>
<dbReference type="FunFam" id="3.90.1030.10:FF:000001">
    <property type="entry name" value="50S ribosomal protein L17"/>
    <property type="match status" value="1"/>
</dbReference>
<dbReference type="Gene3D" id="3.90.1030.10">
    <property type="entry name" value="Ribosomal protein L17"/>
    <property type="match status" value="1"/>
</dbReference>
<dbReference type="HAMAP" id="MF_01368">
    <property type="entry name" value="Ribosomal_bL17"/>
    <property type="match status" value="1"/>
</dbReference>
<dbReference type="InterPro" id="IPR000456">
    <property type="entry name" value="Ribosomal_bL17"/>
</dbReference>
<dbReference type="InterPro" id="IPR047859">
    <property type="entry name" value="Ribosomal_bL17_CS"/>
</dbReference>
<dbReference type="InterPro" id="IPR036373">
    <property type="entry name" value="Ribosomal_bL17_sf"/>
</dbReference>
<dbReference type="NCBIfam" id="TIGR00059">
    <property type="entry name" value="L17"/>
    <property type="match status" value="1"/>
</dbReference>
<dbReference type="PANTHER" id="PTHR14413:SF16">
    <property type="entry name" value="LARGE RIBOSOMAL SUBUNIT PROTEIN BL17M"/>
    <property type="match status" value="1"/>
</dbReference>
<dbReference type="PANTHER" id="PTHR14413">
    <property type="entry name" value="RIBOSOMAL PROTEIN L17"/>
    <property type="match status" value="1"/>
</dbReference>
<dbReference type="Pfam" id="PF01196">
    <property type="entry name" value="Ribosomal_L17"/>
    <property type="match status" value="1"/>
</dbReference>
<dbReference type="SUPFAM" id="SSF64263">
    <property type="entry name" value="Prokaryotic ribosomal protein L17"/>
    <property type="match status" value="1"/>
</dbReference>
<dbReference type="PROSITE" id="PS01167">
    <property type="entry name" value="RIBOSOMAL_L17"/>
    <property type="match status" value="1"/>
</dbReference>
<evidence type="ECO:0000255" key="1">
    <source>
        <dbReference type="HAMAP-Rule" id="MF_01368"/>
    </source>
</evidence>
<evidence type="ECO:0000305" key="2"/>
<sequence>MRHRYSNRKLNRTTSHRLAMLRNMANSLLKHEVIVTTLPKAKELRRVAEPLITLGKKPSLANRRLAFDRTRDREIVVKLFDVLGARYATRNGGYVRILKYGFRKGDNAPMALVELVDRPEDAVAVEDNSAE</sequence>
<proteinExistence type="inferred from homology"/>